<sequence length="276" mass="30152">MESTIGIDAGGTLTKIAYLNEKMQLAFEKFYSNEQNKIIDWLKQNTGKKQICITGGKAKQLQQLLSNSYKIVELNEFEATLIGVRYILKEEKYDINNFILTNIGTGTSIHYVYNDQYIRAGGTGVGGGTIMGLSKLLTNLEHFEDVIPLTKVGSRKELDITVGDIYGGILSPIDNSLTASNFGKAATIESNYNSSDILATVQGLVGEVVTALSLQFAETKNIDHIIYIGSTLCNNIHLQNIISSYTKYQNKIPIFLQDGGNSGAIGALLHVANKKS</sequence>
<evidence type="ECO:0000255" key="1">
    <source>
        <dbReference type="HAMAP-Rule" id="MF_01273"/>
    </source>
</evidence>
<name>COAW_BACC1</name>
<reference key="1">
    <citation type="journal article" date="2004" name="Nucleic Acids Res.">
        <title>The genome sequence of Bacillus cereus ATCC 10987 reveals metabolic adaptations and a large plasmid related to Bacillus anthracis pXO1.</title>
        <authorList>
            <person name="Rasko D.A."/>
            <person name="Ravel J."/>
            <person name="Oekstad O.A."/>
            <person name="Helgason E."/>
            <person name="Cer R.Z."/>
            <person name="Jiang L."/>
            <person name="Shores K.A."/>
            <person name="Fouts D.E."/>
            <person name="Tourasse N.J."/>
            <person name="Angiuoli S.V."/>
            <person name="Kolonay J.F."/>
            <person name="Nelson W.C."/>
            <person name="Kolstoe A.-B."/>
            <person name="Fraser C.M."/>
            <person name="Read T.D."/>
        </authorList>
    </citation>
    <scope>NUCLEOTIDE SEQUENCE [LARGE SCALE GENOMIC DNA]</scope>
    <source>
        <strain>ATCC 10987 / NRS 248</strain>
    </source>
</reference>
<protein>
    <recommendedName>
        <fullName evidence="1">Type II pantothenate kinase</fullName>
        <ecNumber evidence="1">2.7.1.33</ecNumber>
    </recommendedName>
    <alternativeName>
        <fullName evidence="1">PanK-II</fullName>
    </alternativeName>
    <alternativeName>
        <fullName evidence="1">Pantothenic acid kinase</fullName>
    </alternativeName>
</protein>
<proteinExistence type="inferred from homology"/>
<gene>
    <name evidence="1" type="primary">coaW</name>
    <name type="ordered locus">BCE_2940</name>
</gene>
<dbReference type="EC" id="2.7.1.33" evidence="1"/>
<dbReference type="EMBL" id="AE017194">
    <property type="protein sequence ID" value="AAS41851.1"/>
    <property type="molecule type" value="Genomic_DNA"/>
</dbReference>
<dbReference type="SMR" id="Q736G1"/>
<dbReference type="KEGG" id="bca:BCE_2940"/>
<dbReference type="HOGENOM" id="CLU_087521_1_0_9"/>
<dbReference type="UniPathway" id="UPA00241">
    <property type="reaction ID" value="UER00352"/>
</dbReference>
<dbReference type="Proteomes" id="UP000002527">
    <property type="component" value="Chromosome"/>
</dbReference>
<dbReference type="GO" id="GO:0005829">
    <property type="term" value="C:cytosol"/>
    <property type="evidence" value="ECO:0007669"/>
    <property type="project" value="TreeGrafter"/>
</dbReference>
<dbReference type="GO" id="GO:0005524">
    <property type="term" value="F:ATP binding"/>
    <property type="evidence" value="ECO:0007669"/>
    <property type="project" value="UniProtKB-UniRule"/>
</dbReference>
<dbReference type="GO" id="GO:0004594">
    <property type="term" value="F:pantothenate kinase activity"/>
    <property type="evidence" value="ECO:0007669"/>
    <property type="project" value="UniProtKB-UniRule"/>
</dbReference>
<dbReference type="GO" id="GO:0015937">
    <property type="term" value="P:coenzyme A biosynthetic process"/>
    <property type="evidence" value="ECO:0007669"/>
    <property type="project" value="UniProtKB-UniRule"/>
</dbReference>
<dbReference type="CDD" id="cd24085">
    <property type="entry name" value="ASKHA_NBD_PanK-II_bac"/>
    <property type="match status" value="1"/>
</dbReference>
<dbReference type="Gene3D" id="3.30.420.40">
    <property type="match status" value="3"/>
</dbReference>
<dbReference type="HAMAP" id="MF_01273">
    <property type="entry name" value="Pantothen_kinase_2"/>
    <property type="match status" value="1"/>
</dbReference>
<dbReference type="InterPro" id="IPR043129">
    <property type="entry name" value="ATPase_NBD"/>
</dbReference>
<dbReference type="InterPro" id="IPR004567">
    <property type="entry name" value="Type_II_PanK"/>
</dbReference>
<dbReference type="InterPro" id="IPR011602">
    <property type="entry name" value="Type_II_PanK_bac"/>
</dbReference>
<dbReference type="NCBIfam" id="TIGR00555">
    <property type="entry name" value="panK_eukar"/>
    <property type="match status" value="1"/>
</dbReference>
<dbReference type="NCBIfam" id="NF009842">
    <property type="entry name" value="PRK13317.1"/>
    <property type="match status" value="1"/>
</dbReference>
<dbReference type="PANTHER" id="PTHR12280:SF20">
    <property type="entry name" value="4'-PHOSPHOPANTETHEINE PHOSPHATASE"/>
    <property type="match status" value="1"/>
</dbReference>
<dbReference type="PANTHER" id="PTHR12280">
    <property type="entry name" value="PANTOTHENATE KINASE"/>
    <property type="match status" value="1"/>
</dbReference>
<dbReference type="Pfam" id="PF03630">
    <property type="entry name" value="Fumble"/>
    <property type="match status" value="1"/>
</dbReference>
<dbReference type="PIRSF" id="PIRSF036940">
    <property type="entry name" value="PanK_bac_aCoA"/>
    <property type="match status" value="1"/>
</dbReference>
<dbReference type="SUPFAM" id="SSF53067">
    <property type="entry name" value="Actin-like ATPase domain"/>
    <property type="match status" value="1"/>
</dbReference>
<organism>
    <name type="scientific">Bacillus cereus (strain ATCC 10987 / NRS 248)</name>
    <dbReference type="NCBI Taxonomy" id="222523"/>
    <lineage>
        <taxon>Bacteria</taxon>
        <taxon>Bacillati</taxon>
        <taxon>Bacillota</taxon>
        <taxon>Bacilli</taxon>
        <taxon>Bacillales</taxon>
        <taxon>Bacillaceae</taxon>
        <taxon>Bacillus</taxon>
        <taxon>Bacillus cereus group</taxon>
    </lineage>
</organism>
<feature type="chain" id="PRO_0000261338" description="Type II pantothenate kinase">
    <location>
        <begin position="1"/>
        <end position="276"/>
    </location>
</feature>
<feature type="active site" description="Proton acceptor" evidence="1">
    <location>
        <position position="76"/>
    </location>
</feature>
<feature type="binding site" evidence="1">
    <location>
        <begin position="8"/>
        <end position="15"/>
    </location>
    <ligand>
        <name>ATP</name>
        <dbReference type="ChEBI" id="CHEBI:30616"/>
    </ligand>
</feature>
<feature type="binding site" evidence="1">
    <location>
        <position position="105"/>
    </location>
    <ligand>
        <name>ATP</name>
        <dbReference type="ChEBI" id="CHEBI:30616"/>
    </ligand>
</feature>
<feature type="binding site" evidence="1">
    <location>
        <begin position="127"/>
        <end position="131"/>
    </location>
    <ligand>
        <name>ATP</name>
        <dbReference type="ChEBI" id="CHEBI:30616"/>
    </ligand>
</feature>
<feature type="binding site" evidence="1">
    <location>
        <position position="143"/>
    </location>
    <ligand>
        <name>ATP</name>
        <dbReference type="ChEBI" id="CHEBI:30616"/>
    </ligand>
</feature>
<feature type="binding site" evidence="1">
    <location>
        <position position="230"/>
    </location>
    <ligand>
        <name>ATP</name>
        <dbReference type="ChEBI" id="CHEBI:30616"/>
    </ligand>
</feature>
<accession>Q736G1</accession>
<keyword id="KW-0067">ATP-binding</keyword>
<keyword id="KW-0173">Coenzyme A biosynthesis</keyword>
<keyword id="KW-0963">Cytoplasm</keyword>
<keyword id="KW-0418">Kinase</keyword>
<keyword id="KW-0547">Nucleotide-binding</keyword>
<keyword id="KW-0808">Transferase</keyword>
<comment type="function">
    <text evidence="1">Catalyzes the phosphorylation of pantothenate (Pan), the first step in CoA biosynthesis.</text>
</comment>
<comment type="catalytic activity">
    <reaction evidence="1">
        <text>(R)-pantothenate + ATP = (R)-4'-phosphopantothenate + ADP + H(+)</text>
        <dbReference type="Rhea" id="RHEA:16373"/>
        <dbReference type="ChEBI" id="CHEBI:10986"/>
        <dbReference type="ChEBI" id="CHEBI:15378"/>
        <dbReference type="ChEBI" id="CHEBI:29032"/>
        <dbReference type="ChEBI" id="CHEBI:30616"/>
        <dbReference type="ChEBI" id="CHEBI:456216"/>
        <dbReference type="EC" id="2.7.1.33"/>
    </reaction>
</comment>
<comment type="pathway">
    <text evidence="1">Cofactor biosynthesis; coenzyme A biosynthesis; CoA from (R)-pantothenate: step 1/5.</text>
</comment>
<comment type="subunit">
    <text evidence="1">Homodimer.</text>
</comment>
<comment type="subcellular location">
    <subcellularLocation>
        <location evidence="1">Cytoplasm</location>
    </subcellularLocation>
</comment>
<comment type="similarity">
    <text evidence="1">Belongs to the type II pantothenate kinase family.</text>
</comment>